<gene>
    <name type="primary">Cyp3a41a</name>
    <name type="synonym">Cyp3a41</name>
</gene>
<gene>
    <name type="primary">Cyp3a41b</name>
</gene>
<keyword id="KW-0256">Endoplasmic reticulum</keyword>
<keyword id="KW-0349">Heme</keyword>
<keyword id="KW-0408">Iron</keyword>
<keyword id="KW-0472">Membrane</keyword>
<keyword id="KW-0479">Metal-binding</keyword>
<keyword id="KW-0492">Microsome</keyword>
<keyword id="KW-0503">Monooxygenase</keyword>
<keyword id="KW-0560">Oxidoreductase</keyword>
<keyword id="KW-1185">Reference proteome</keyword>
<evidence type="ECO:0000250" key="1"/>
<evidence type="ECO:0000305" key="2"/>
<sequence>MNLFSALSLDTWVLLAIILVLLYRYGTRTHGLFKKQGIPGPKPLPFLGTVLNYYKGLWKFDMECYEKYGKTWGLFDGQMPLFVITDPEMIKNVLVKECFSVFTNRREFGPVGIMSKAISISKDEEWKRYRALLSPTFTSGKLKEMFPVIEQYGDILVKYLMQEAEKGKPVTMKDVLGAYSIDVITSTSFGVNVDSLNNPEDPFVEKAKGILRVDFFDPLVFSVVLFPFLTPVYEMLNICMFPKDSIEFFKKFVNRMKESRLDSKQKHRVDFLQLMMNAHNNSKDKDSHKALSDMEITAQSIVFIFAGYETTSSTLSFTLYCLATHPDIQKKLQEEIDETLPNKAPPTYDTVMEMEYLDMVLNETLRLYPIGNRLERFCKKDVELNGVYIPKGSTVMIPSYALHHDPQHWPEPEEFQPERFSKENKGSIDPYLYMPFGIGPRNCIGMRFAFMTMKLALTKVMQNFSFQPCQETQIPLKLSRQGLLQPEKPIVLKVVPRDVVITGA</sequence>
<organism>
    <name type="scientific">Mus musculus</name>
    <name type="common">Mouse</name>
    <dbReference type="NCBI Taxonomy" id="10090"/>
    <lineage>
        <taxon>Eukaryota</taxon>
        <taxon>Metazoa</taxon>
        <taxon>Chordata</taxon>
        <taxon>Craniata</taxon>
        <taxon>Vertebrata</taxon>
        <taxon>Euteleostomi</taxon>
        <taxon>Mammalia</taxon>
        <taxon>Eutheria</taxon>
        <taxon>Euarchontoglires</taxon>
        <taxon>Glires</taxon>
        <taxon>Rodentia</taxon>
        <taxon>Myomorpha</taxon>
        <taxon>Muroidea</taxon>
        <taxon>Muridae</taxon>
        <taxon>Murinae</taxon>
        <taxon>Mus</taxon>
        <taxon>Mus</taxon>
    </lineage>
</organism>
<accession>Q9JMA7</accession>
<accession>B2RQU5</accession>
<accession>E9QJT9</accession>
<name>CP341_MOUSE</name>
<comment type="catalytic activity">
    <reaction>
        <text>an organic molecule + reduced [NADPH--hemoprotein reductase] + O2 = an alcohol + oxidized [NADPH--hemoprotein reductase] + H2O + H(+)</text>
        <dbReference type="Rhea" id="RHEA:17149"/>
        <dbReference type="Rhea" id="RHEA-COMP:11964"/>
        <dbReference type="Rhea" id="RHEA-COMP:11965"/>
        <dbReference type="ChEBI" id="CHEBI:15377"/>
        <dbReference type="ChEBI" id="CHEBI:15378"/>
        <dbReference type="ChEBI" id="CHEBI:15379"/>
        <dbReference type="ChEBI" id="CHEBI:30879"/>
        <dbReference type="ChEBI" id="CHEBI:57618"/>
        <dbReference type="ChEBI" id="CHEBI:58210"/>
        <dbReference type="ChEBI" id="CHEBI:142491"/>
        <dbReference type="EC" id="1.14.14.1"/>
    </reaction>
</comment>
<comment type="cofactor">
    <cofactor evidence="1">
        <name>heme</name>
        <dbReference type="ChEBI" id="CHEBI:30413"/>
    </cofactor>
</comment>
<comment type="subcellular location">
    <subcellularLocation>
        <location evidence="2">Endoplasmic reticulum membrane</location>
        <topology evidence="2">Peripheral membrane protein</topology>
    </subcellularLocation>
    <subcellularLocation>
        <location evidence="2">Microsome membrane</location>
        <topology evidence="2">Peripheral membrane protein</topology>
    </subcellularLocation>
</comment>
<comment type="tissue specificity">
    <text>Expressed in liver. Also expressed in the kidneys of female mice, with traces in the stomach, ovary, and heart of female mice and in the testis of male mice.</text>
</comment>
<comment type="developmental stage">
    <text>Detected immediately after birth in the livers of animals of both sexes, but increases with age in females, whereas it is gradually reduced in males, resulting in predominantly female-specific expression in livers.</text>
</comment>
<comment type="similarity">
    <text evidence="2">Belongs to the cytochrome P450 family.</text>
</comment>
<proteinExistence type="evidence at protein level"/>
<feature type="chain" id="PRO_0000051813" description="Cytochrome P450 3A41">
    <location>
        <begin position="1"/>
        <end position="504"/>
    </location>
</feature>
<feature type="binding site" description="axial binding residue" evidence="1">
    <location>
        <position position="443"/>
    </location>
    <ligand>
        <name>heme</name>
        <dbReference type="ChEBI" id="CHEBI:30413"/>
    </ligand>
    <ligandPart>
        <name>Fe</name>
        <dbReference type="ChEBI" id="CHEBI:18248"/>
    </ligandPart>
</feature>
<feature type="sequence conflict" description="In Ref. 1; BAA95951 and 3; AAI38084/AAI38085." evidence="2" ref="1 3">
    <original>K</original>
    <variation>T</variation>
    <location>
        <position position="42"/>
    </location>
</feature>
<protein>
    <recommendedName>
        <fullName>Cytochrome P450 3A41</fullName>
        <ecNumber>1.14.14.1</ecNumber>
    </recommendedName>
</protein>
<dbReference type="EC" id="1.14.14.1"/>
<dbReference type="EMBL" id="AB033414">
    <property type="protein sequence ID" value="BAA95951.1"/>
    <property type="molecule type" value="mRNA"/>
</dbReference>
<dbReference type="EMBL" id="AC124483">
    <property type="status" value="NOT_ANNOTATED_CDS"/>
    <property type="molecule type" value="Genomic_DNA"/>
</dbReference>
<dbReference type="EMBL" id="AC166648">
    <property type="status" value="NOT_ANNOTATED_CDS"/>
    <property type="molecule type" value="Genomic_DNA"/>
</dbReference>
<dbReference type="EMBL" id="BC138083">
    <property type="protein sequence ID" value="AAI38084.1"/>
    <property type="molecule type" value="mRNA"/>
</dbReference>
<dbReference type="EMBL" id="BC138084">
    <property type="protein sequence ID" value="AAI38085.1"/>
    <property type="molecule type" value="mRNA"/>
</dbReference>
<dbReference type="CCDS" id="CCDS39389.1"/>
<dbReference type="RefSeq" id="NP_001098629.1">
    <property type="nucleotide sequence ID" value="NM_001105159.1"/>
</dbReference>
<dbReference type="RefSeq" id="NP_059092.2">
    <property type="nucleotide sequence ID" value="NM_017396.3"/>
</dbReference>
<dbReference type="SMR" id="Q9JMA7"/>
<dbReference type="FunCoup" id="Q9JMA7">
    <property type="interactions" value="277"/>
</dbReference>
<dbReference type="STRING" id="10090.ENSMUSP00000075234"/>
<dbReference type="ChEMBL" id="CHEMBL3637781"/>
<dbReference type="iPTMnet" id="Q9JMA7"/>
<dbReference type="PhosphoSitePlus" id="Q9JMA7"/>
<dbReference type="SwissPalm" id="Q9JMA7"/>
<dbReference type="jPOST" id="Q9JMA7"/>
<dbReference type="PaxDb" id="10090-ENSMUSP00000075234"/>
<dbReference type="PeptideAtlas" id="Q9JMA7"/>
<dbReference type="ProteomicsDB" id="283618"/>
<dbReference type="DNASU" id="53973"/>
<dbReference type="Ensembl" id="ENSMUST00000075837.8">
    <property type="protein sequence ID" value="ENSMUSP00000075234.7"/>
    <property type="gene ID" value="ENSMUSG00000075552.5"/>
</dbReference>
<dbReference type="Ensembl" id="ENSMUST00000094111.6">
    <property type="protein sequence ID" value="ENSMUSP00000091659.5"/>
    <property type="gene ID" value="ENSMUSG00000075551.5"/>
</dbReference>
<dbReference type="GeneID" id="100041375"/>
<dbReference type="GeneID" id="53973"/>
<dbReference type="KEGG" id="mmu:100041375"/>
<dbReference type="KEGG" id="mmu:53973"/>
<dbReference type="UCSC" id="uc012egw.1">
    <property type="organism name" value="mouse"/>
</dbReference>
<dbReference type="AGR" id="MGI:1858451"/>
<dbReference type="AGR" id="MGI:3714859"/>
<dbReference type="CTD" id="100041375"/>
<dbReference type="CTD" id="53973"/>
<dbReference type="MGI" id="MGI:1858451">
    <property type="gene designation" value="Cyp3a41a"/>
</dbReference>
<dbReference type="MGI" id="MGI:3714859">
    <property type="gene designation" value="Cyp3a41b"/>
</dbReference>
<dbReference type="VEuPathDB" id="HostDB:ENSMUSG00000075551"/>
<dbReference type="VEuPathDB" id="HostDB:ENSMUSG00000075552"/>
<dbReference type="eggNOG" id="KOG0158">
    <property type="taxonomic scope" value="Eukaryota"/>
</dbReference>
<dbReference type="GeneTree" id="ENSGT00950000182958"/>
<dbReference type="HOGENOM" id="CLU_001570_5_2_1"/>
<dbReference type="InParanoid" id="Q9JMA7"/>
<dbReference type="OMA" id="YHYWVAT"/>
<dbReference type="OrthoDB" id="1470350at2759"/>
<dbReference type="PhylomeDB" id="Q9JMA7"/>
<dbReference type="TreeFam" id="TF105087"/>
<dbReference type="Reactome" id="R-MMU-211945">
    <property type="pathway name" value="Phase I - Functionalization of compounds"/>
</dbReference>
<dbReference type="Reactome" id="R-MMU-211958">
    <property type="pathway name" value="Miscellaneous substrates"/>
</dbReference>
<dbReference type="Reactome" id="R-MMU-211981">
    <property type="pathway name" value="Xenobiotics"/>
</dbReference>
<dbReference type="Reactome" id="R-MMU-5423646">
    <property type="pathway name" value="Aflatoxin activation and detoxification"/>
</dbReference>
<dbReference type="Reactome" id="R-MMU-9027307">
    <property type="pathway name" value="Biosynthesis of maresin-like SPMs"/>
</dbReference>
<dbReference type="Reactome" id="R-MMU-9749641">
    <property type="pathway name" value="Aspirin ADME"/>
</dbReference>
<dbReference type="Reactome" id="R-MMU-9754706">
    <property type="pathway name" value="Atorvastatin ADME"/>
</dbReference>
<dbReference type="Reactome" id="R-MMU-9757110">
    <property type="pathway name" value="Prednisone ADME"/>
</dbReference>
<dbReference type="BioGRID-ORCS" id="100041375">
    <property type="hits" value="5 hits in 42 CRISPR screens"/>
</dbReference>
<dbReference type="BioGRID-ORCS" id="53973">
    <property type="hits" value="5 hits in 41 CRISPR screens"/>
</dbReference>
<dbReference type="ChiTaRS" id="Cyp3a41b">
    <property type="organism name" value="mouse"/>
</dbReference>
<dbReference type="PRO" id="PR:Q9JMA7"/>
<dbReference type="Proteomes" id="UP000000589">
    <property type="component" value="Chromosome 5"/>
</dbReference>
<dbReference type="RNAct" id="Q9JMA7">
    <property type="molecule type" value="protein"/>
</dbReference>
<dbReference type="Bgee" id="ENSMUSG00000075551">
    <property type="expression patterns" value="Expressed in liver and 7 other cell types or tissues"/>
</dbReference>
<dbReference type="GO" id="GO:0005789">
    <property type="term" value="C:endoplasmic reticulum membrane"/>
    <property type="evidence" value="ECO:0007669"/>
    <property type="project" value="UniProtKB-SubCell"/>
</dbReference>
<dbReference type="GO" id="GO:0020037">
    <property type="term" value="F:heme binding"/>
    <property type="evidence" value="ECO:0007669"/>
    <property type="project" value="InterPro"/>
</dbReference>
<dbReference type="GO" id="GO:0005506">
    <property type="term" value="F:iron ion binding"/>
    <property type="evidence" value="ECO:0007669"/>
    <property type="project" value="InterPro"/>
</dbReference>
<dbReference type="GO" id="GO:0016712">
    <property type="term" value="F:oxidoreductase activity, acting on paired donors, with incorporation or reduction of molecular oxygen, reduced flavin or flavoprotein as one donor, and incorporation of one atom of oxygen"/>
    <property type="evidence" value="ECO:0007669"/>
    <property type="project" value="UniProtKB-EC"/>
</dbReference>
<dbReference type="GO" id="GO:0010468">
    <property type="term" value="P:regulation of gene expression"/>
    <property type="evidence" value="ECO:0000314"/>
    <property type="project" value="MGI"/>
</dbReference>
<dbReference type="GO" id="GO:0009617">
    <property type="term" value="P:response to bacterium"/>
    <property type="evidence" value="ECO:0000270"/>
    <property type="project" value="MGI"/>
</dbReference>
<dbReference type="CDD" id="cd20650">
    <property type="entry name" value="CYP3A"/>
    <property type="match status" value="1"/>
</dbReference>
<dbReference type="FunFam" id="1.10.630.10:FF:000096">
    <property type="entry name" value="Cytochrome P450 3A4"/>
    <property type="match status" value="1"/>
</dbReference>
<dbReference type="Gene3D" id="1.10.630.10">
    <property type="entry name" value="Cytochrome P450"/>
    <property type="match status" value="1"/>
</dbReference>
<dbReference type="InterPro" id="IPR001128">
    <property type="entry name" value="Cyt_P450"/>
</dbReference>
<dbReference type="InterPro" id="IPR017972">
    <property type="entry name" value="Cyt_P450_CS"/>
</dbReference>
<dbReference type="InterPro" id="IPR008072">
    <property type="entry name" value="Cyt_P450_E_CYP3A"/>
</dbReference>
<dbReference type="InterPro" id="IPR002402">
    <property type="entry name" value="Cyt_P450_E_grp-II"/>
</dbReference>
<dbReference type="InterPro" id="IPR036396">
    <property type="entry name" value="Cyt_P450_sf"/>
</dbReference>
<dbReference type="InterPro" id="IPR050705">
    <property type="entry name" value="Cytochrome_P450_3A"/>
</dbReference>
<dbReference type="PANTHER" id="PTHR24302:SF49">
    <property type="entry name" value="CYTOCHROME P450 3A-RELATED"/>
    <property type="match status" value="1"/>
</dbReference>
<dbReference type="PANTHER" id="PTHR24302">
    <property type="entry name" value="CYTOCHROME P450 FAMILY 3"/>
    <property type="match status" value="1"/>
</dbReference>
<dbReference type="Pfam" id="PF00067">
    <property type="entry name" value="p450"/>
    <property type="match status" value="1"/>
</dbReference>
<dbReference type="PRINTS" id="PR00464">
    <property type="entry name" value="EP450II"/>
</dbReference>
<dbReference type="PRINTS" id="PR01689">
    <property type="entry name" value="EP450IICYP3A"/>
</dbReference>
<dbReference type="PRINTS" id="PR00385">
    <property type="entry name" value="P450"/>
</dbReference>
<dbReference type="SUPFAM" id="SSF48264">
    <property type="entry name" value="Cytochrome P450"/>
    <property type="match status" value="1"/>
</dbReference>
<dbReference type="PROSITE" id="PS00086">
    <property type="entry name" value="CYTOCHROME_P450"/>
    <property type="match status" value="1"/>
</dbReference>
<reference key="1">
    <citation type="journal article" date="2000" name="Arch. Biochem. Biophys.">
        <title>A novel female-specific member of the CYP3A gene subfamily in the mouse liver.</title>
        <authorList>
            <person name="Sakuma T."/>
            <person name="Takai M."/>
            <person name="Endo Y."/>
            <person name="Kuroiwa M."/>
            <person name="Ohara A."/>
            <person name="Jarukamjorn K."/>
            <person name="Honma R."/>
            <person name="Nemoto N."/>
        </authorList>
    </citation>
    <scope>NUCLEOTIDE SEQUENCE [MRNA]</scope>
    <source>
        <strain>ddY</strain>
        <tissue>Liver</tissue>
    </source>
</reference>
<reference key="2">
    <citation type="journal article" date="2009" name="PLoS Biol.">
        <title>Lineage-specific biology revealed by a finished genome assembly of the mouse.</title>
        <authorList>
            <person name="Church D.M."/>
            <person name="Goodstadt L."/>
            <person name="Hillier L.W."/>
            <person name="Zody M.C."/>
            <person name="Goldstein S."/>
            <person name="She X."/>
            <person name="Bult C.J."/>
            <person name="Agarwala R."/>
            <person name="Cherry J.L."/>
            <person name="DiCuccio M."/>
            <person name="Hlavina W."/>
            <person name="Kapustin Y."/>
            <person name="Meric P."/>
            <person name="Maglott D."/>
            <person name="Birtle Z."/>
            <person name="Marques A.C."/>
            <person name="Graves T."/>
            <person name="Zhou S."/>
            <person name="Teague B."/>
            <person name="Potamousis K."/>
            <person name="Churas C."/>
            <person name="Place M."/>
            <person name="Herschleb J."/>
            <person name="Runnheim R."/>
            <person name="Forrest D."/>
            <person name="Amos-Landgraf J."/>
            <person name="Schwartz D.C."/>
            <person name="Cheng Z."/>
            <person name="Lindblad-Toh K."/>
            <person name="Eichler E.E."/>
            <person name="Ponting C.P."/>
        </authorList>
    </citation>
    <scope>NUCLEOTIDE SEQUENCE [LARGE SCALE GENOMIC DNA]</scope>
    <source>
        <strain>C57BL/6J</strain>
    </source>
</reference>
<reference key="3">
    <citation type="journal article" date="2004" name="Genome Res.">
        <title>The status, quality, and expansion of the NIH full-length cDNA project: the Mammalian Gene Collection (MGC).</title>
        <authorList>
            <consortium name="The MGC Project Team"/>
        </authorList>
    </citation>
    <scope>NUCLEOTIDE SEQUENCE [LARGE SCALE MRNA]</scope>
</reference>
<reference key="4">
    <citation type="journal article" date="2010" name="Cell">
        <title>A tissue-specific atlas of mouse protein phosphorylation and expression.</title>
        <authorList>
            <person name="Huttlin E.L."/>
            <person name="Jedrychowski M.P."/>
            <person name="Elias J.E."/>
            <person name="Goswami T."/>
            <person name="Rad R."/>
            <person name="Beausoleil S.A."/>
            <person name="Villen J."/>
            <person name="Haas W."/>
            <person name="Sowa M.E."/>
            <person name="Gygi S.P."/>
        </authorList>
    </citation>
    <scope>IDENTIFICATION BY MASS SPECTROMETRY [LARGE SCALE ANALYSIS]</scope>
    <source>
        <tissue>Liver</tissue>
    </source>
</reference>